<gene>
    <name type="ORF">SPAC513.04</name>
</gene>
<feature type="chain" id="PRO_0000304090" description="Uncharacterized protein C513.04">
    <location>
        <begin position="1"/>
        <end position="100"/>
    </location>
</feature>
<feature type="transmembrane region" description="Helical" evidence="1">
    <location>
        <begin position="13"/>
        <end position="32"/>
    </location>
</feature>
<keyword id="KW-0472">Membrane</keyword>
<keyword id="KW-0496">Mitochondrion</keyword>
<keyword id="KW-1185">Reference proteome</keyword>
<keyword id="KW-0812">Transmembrane</keyword>
<keyword id="KW-1133">Transmembrane helix</keyword>
<evidence type="ECO:0000255" key="1"/>
<evidence type="ECO:0000305" key="2"/>
<reference key="1">
    <citation type="journal article" date="2002" name="Nature">
        <title>The genome sequence of Schizosaccharomyces pombe.</title>
        <authorList>
            <person name="Wood V."/>
            <person name="Gwilliam R."/>
            <person name="Rajandream M.A."/>
            <person name="Lyne M.H."/>
            <person name="Lyne R."/>
            <person name="Stewart A."/>
            <person name="Sgouros J.G."/>
            <person name="Peat N."/>
            <person name="Hayles J."/>
            <person name="Baker S.G."/>
            <person name="Basham D."/>
            <person name="Bowman S."/>
            <person name="Brooks K."/>
            <person name="Brown D."/>
            <person name="Brown S."/>
            <person name="Chillingworth T."/>
            <person name="Churcher C.M."/>
            <person name="Collins M."/>
            <person name="Connor R."/>
            <person name="Cronin A."/>
            <person name="Davis P."/>
            <person name="Feltwell T."/>
            <person name="Fraser A."/>
            <person name="Gentles S."/>
            <person name="Goble A."/>
            <person name="Hamlin N."/>
            <person name="Harris D.E."/>
            <person name="Hidalgo J."/>
            <person name="Hodgson G."/>
            <person name="Holroyd S."/>
            <person name="Hornsby T."/>
            <person name="Howarth S."/>
            <person name="Huckle E.J."/>
            <person name="Hunt S."/>
            <person name="Jagels K."/>
            <person name="James K.D."/>
            <person name="Jones L."/>
            <person name="Jones M."/>
            <person name="Leather S."/>
            <person name="McDonald S."/>
            <person name="McLean J."/>
            <person name="Mooney P."/>
            <person name="Moule S."/>
            <person name="Mungall K.L."/>
            <person name="Murphy L.D."/>
            <person name="Niblett D."/>
            <person name="Odell C."/>
            <person name="Oliver K."/>
            <person name="O'Neil S."/>
            <person name="Pearson D."/>
            <person name="Quail M.A."/>
            <person name="Rabbinowitsch E."/>
            <person name="Rutherford K.M."/>
            <person name="Rutter S."/>
            <person name="Saunders D."/>
            <person name="Seeger K."/>
            <person name="Sharp S."/>
            <person name="Skelton J."/>
            <person name="Simmonds M.N."/>
            <person name="Squares R."/>
            <person name="Squares S."/>
            <person name="Stevens K."/>
            <person name="Taylor K."/>
            <person name="Taylor R.G."/>
            <person name="Tivey A."/>
            <person name="Walsh S.V."/>
            <person name="Warren T."/>
            <person name="Whitehead S."/>
            <person name="Woodward J.R."/>
            <person name="Volckaert G."/>
            <person name="Aert R."/>
            <person name="Robben J."/>
            <person name="Grymonprez B."/>
            <person name="Weltjens I."/>
            <person name="Vanstreels E."/>
            <person name="Rieger M."/>
            <person name="Schaefer M."/>
            <person name="Mueller-Auer S."/>
            <person name="Gabel C."/>
            <person name="Fuchs M."/>
            <person name="Duesterhoeft A."/>
            <person name="Fritzc C."/>
            <person name="Holzer E."/>
            <person name="Moestl D."/>
            <person name="Hilbert H."/>
            <person name="Borzym K."/>
            <person name="Langer I."/>
            <person name="Beck A."/>
            <person name="Lehrach H."/>
            <person name="Reinhardt R."/>
            <person name="Pohl T.M."/>
            <person name="Eger P."/>
            <person name="Zimmermann W."/>
            <person name="Wedler H."/>
            <person name="Wambutt R."/>
            <person name="Purnelle B."/>
            <person name="Goffeau A."/>
            <person name="Cadieu E."/>
            <person name="Dreano S."/>
            <person name="Gloux S."/>
            <person name="Lelaure V."/>
            <person name="Mottier S."/>
            <person name="Galibert F."/>
            <person name="Aves S.J."/>
            <person name="Xiang Z."/>
            <person name="Hunt C."/>
            <person name="Moore K."/>
            <person name="Hurst S.M."/>
            <person name="Lucas M."/>
            <person name="Rochet M."/>
            <person name="Gaillardin C."/>
            <person name="Tallada V.A."/>
            <person name="Garzon A."/>
            <person name="Thode G."/>
            <person name="Daga R.R."/>
            <person name="Cruzado L."/>
            <person name="Jimenez J."/>
            <person name="Sanchez M."/>
            <person name="del Rey F."/>
            <person name="Benito J."/>
            <person name="Dominguez A."/>
            <person name="Revuelta J.L."/>
            <person name="Moreno S."/>
            <person name="Armstrong J."/>
            <person name="Forsburg S.L."/>
            <person name="Cerutti L."/>
            <person name="Lowe T."/>
            <person name="McCombie W.R."/>
            <person name="Paulsen I."/>
            <person name="Potashkin J."/>
            <person name="Shpakovski G.V."/>
            <person name="Ussery D."/>
            <person name="Barrell B.G."/>
            <person name="Nurse P."/>
        </authorList>
    </citation>
    <scope>NUCLEOTIDE SEQUENCE [LARGE SCALE GENOMIC DNA]</scope>
    <source>
        <strain>972 / ATCC 24843</strain>
    </source>
</reference>
<reference key="2">
    <citation type="journal article" date="2006" name="Nat. Biotechnol.">
        <title>ORFeome cloning and global analysis of protein localization in the fission yeast Schizosaccharomyces pombe.</title>
        <authorList>
            <person name="Matsuyama A."/>
            <person name="Arai R."/>
            <person name="Yashiroda Y."/>
            <person name="Shirai A."/>
            <person name="Kamata A."/>
            <person name="Sekido S."/>
            <person name="Kobayashi Y."/>
            <person name="Hashimoto A."/>
            <person name="Hamamoto M."/>
            <person name="Hiraoka Y."/>
            <person name="Horinouchi S."/>
            <person name="Yoshida M."/>
        </authorList>
    </citation>
    <scope>SUBCELLULAR LOCATION [LARGE SCALE ANALYSIS]</scope>
</reference>
<dbReference type="EMBL" id="CU329670">
    <property type="protein sequence ID" value="CAB58727.1"/>
    <property type="molecule type" value="Genomic_DNA"/>
</dbReference>
<dbReference type="PIR" id="T38899">
    <property type="entry name" value="T38899"/>
</dbReference>
<dbReference type="RefSeq" id="NP_593978.1">
    <property type="nucleotide sequence ID" value="NM_001019404.1"/>
</dbReference>
<dbReference type="STRING" id="284812.Q9UT62"/>
<dbReference type="PaxDb" id="4896-SPAC513.04.1"/>
<dbReference type="EnsemblFungi" id="SPAC513.04.1">
    <property type="protein sequence ID" value="SPAC513.04.1:pep"/>
    <property type="gene ID" value="SPAC513.04"/>
</dbReference>
<dbReference type="KEGG" id="spo:2543489"/>
<dbReference type="PomBase" id="SPAC513.04"/>
<dbReference type="VEuPathDB" id="FungiDB:SPAC513.04"/>
<dbReference type="HOGENOM" id="CLU_2307675_0_0_1"/>
<dbReference type="InParanoid" id="Q9UT62"/>
<dbReference type="PRO" id="PR:Q9UT62"/>
<dbReference type="Proteomes" id="UP000002485">
    <property type="component" value="Chromosome I"/>
</dbReference>
<dbReference type="GO" id="GO:0031966">
    <property type="term" value="C:mitochondrial membrane"/>
    <property type="evidence" value="ECO:0007669"/>
    <property type="project" value="UniProtKB-SubCell"/>
</dbReference>
<dbReference type="GO" id="GO:0005739">
    <property type="term" value="C:mitochondrion"/>
    <property type="evidence" value="ECO:0007005"/>
    <property type="project" value="PomBase"/>
</dbReference>
<proteinExistence type="predicted"/>
<accession>Q9UT62</accession>
<name>YKJ4_SCHPO</name>
<sequence length="100" mass="11739">MTAKMAEPLYFRIWSSLNIICLMVTFLNVQLSKTPIVLMPLFIALLKNNRKRETKKQTISVLVQKREEKTKLVLDDANNHNHAFLYHCQYLGQKKHVVIQ</sequence>
<organism>
    <name type="scientific">Schizosaccharomyces pombe (strain 972 / ATCC 24843)</name>
    <name type="common">Fission yeast</name>
    <dbReference type="NCBI Taxonomy" id="284812"/>
    <lineage>
        <taxon>Eukaryota</taxon>
        <taxon>Fungi</taxon>
        <taxon>Dikarya</taxon>
        <taxon>Ascomycota</taxon>
        <taxon>Taphrinomycotina</taxon>
        <taxon>Schizosaccharomycetes</taxon>
        <taxon>Schizosaccharomycetales</taxon>
        <taxon>Schizosaccharomycetaceae</taxon>
        <taxon>Schizosaccharomyces</taxon>
    </lineage>
</organism>
<comment type="subcellular location">
    <subcellularLocation>
        <location evidence="2">Mitochondrion membrane</location>
        <topology evidence="2">Single-pass membrane protein</topology>
    </subcellularLocation>
</comment>
<protein>
    <recommendedName>
        <fullName>Uncharacterized protein C513.04</fullName>
    </recommendedName>
</protein>